<name>SUV3M_ARATH</name>
<protein>
    <recommendedName>
        <fullName evidence="12">DExH-box ATP-dependent RNA helicase DExH16, mitochondrial</fullName>
        <ecNumber evidence="6">3.6.4.13</ecNumber>
    </recommendedName>
    <alternativeName>
        <fullName evidence="9">ATP-dependent RNA helicase SUV3</fullName>
        <shortName evidence="9">AtSUV3</shortName>
    </alternativeName>
    <alternativeName>
        <fullName evidence="10">Protein EMBRYO SAC DEVELOPMENT ARREST 15</fullName>
    </alternativeName>
    <alternativeName>
        <fullName evidence="11">Protein POLLEN DEVELOPMENT DEFECTIVE 17</fullName>
    </alternativeName>
    <alternativeName>
        <fullName evidence="11">Protein POLLEN DEVELOPMENT DEFECTIVE 26</fullName>
    </alternativeName>
    <alternativeName>
        <fullName evidence="9">Protein SUPPRESSOR OF VAR 3</fullName>
    </alternativeName>
</protein>
<keyword id="KW-0067">ATP-binding</keyword>
<keyword id="KW-0347">Helicase</keyword>
<keyword id="KW-0378">Hydrolase</keyword>
<keyword id="KW-0496">Mitochondrion</keyword>
<keyword id="KW-1135">Mitochondrion nucleoid</keyword>
<keyword id="KW-0547">Nucleotide-binding</keyword>
<keyword id="KW-0539">Nucleus</keyword>
<keyword id="KW-1185">Reference proteome</keyword>
<keyword id="KW-0694">RNA-binding</keyword>
<keyword id="KW-0809">Transit peptide</keyword>
<proteinExistence type="evidence at protein level"/>
<gene>
    <name evidence="9" type="primary">SUV3</name>
    <name evidence="10" type="synonym">EDA15</name>
    <name evidence="11" type="synonym">PDD17</name>
    <name evidence="11" type="synonym">PDD26</name>
    <name evidence="13" type="ordered locus">At4g14790</name>
    <name evidence="14" type="ORF">dl3435c</name>
    <name evidence="16" type="ORF">FCAALL.309</name>
</gene>
<accession>Q9SMX1</accession>
<accession>O23335</accession>
<accession>Q0WMU8</accession>
<sequence>MAYSVVRLRKVSALGISRVLQADKGSLWRFHFEPEFGDLLRLGVLTRNYRKNSGSPKFDFTGTGTTSKFDFTDLTCPHTWYPIARKKKRKVILHVGPTNSGKTYSALKHLEQSSSGVYCGPLRLLAWEVAKRLNKANVPCDLITGQEKDLVEGATHKAVTVEMADVTSVYDCAIIDEIQMVGCKQRGFAFTRALLGIAADELHLCGDPAVVPLVEDILKVTGDDVEVHTYERLSPLVPLKVPVSSVSSIKTGDCLVTFSRKDIYAYKKTIERAGKHLCSVVYGSLPPETRTAQATRFNDETNDFDVLVASDAIGMGLNLNISRIIFSTLQKYDGSETRDLTVSEIKQIAGRAGRFQSKFPIGEVTCLHKEDLPLLHSSLKSPSPILERAGLFPTFDLLSGYSQAHPTHGLYQILEHFVENAKLSSNYFISNVEDMMKVAAIVDELPLGLQEKYLFVVSPVDVNDEISGQGLAQFAQNFSKAGIVRLREILAPDRVKVPKTPTELKELESIHKVLDLYVWLSLRLEDSFPDREVAASQKSICNLLIEQFLEGNRLNSPARFSRYLRRQKLSE</sequence>
<feature type="transit peptide" description="Mitochondrion" evidence="3">
    <location>
        <begin position="1"/>
        <end position="56"/>
    </location>
</feature>
<feature type="chain" id="PRO_0000431533" description="DExH-box ATP-dependent RNA helicase DExH16, mitochondrial" evidence="3">
    <location>
        <begin position="57"/>
        <end position="571"/>
    </location>
</feature>
<feature type="domain" description="Helicase ATP-binding" evidence="1">
    <location>
        <begin position="83"/>
        <end position="212"/>
    </location>
</feature>
<feature type="domain" description="Helicase C-terminal" evidence="5">
    <location>
        <begin position="213"/>
        <end position="399"/>
    </location>
</feature>
<feature type="short sequence motif" description="DEIH box; degenerate" evidence="12">
    <location>
        <begin position="176"/>
        <end position="179"/>
    </location>
</feature>
<feature type="binding site" evidence="4">
    <location>
        <begin position="96"/>
        <end position="103"/>
    </location>
    <ligand>
        <name>ATP</name>
        <dbReference type="ChEBI" id="CHEBI:30616"/>
    </ligand>
</feature>
<feature type="sequence conflict" description="In Ref. 6; BAF01552." evidence="12" ref="6">
    <original>L</original>
    <variation>W</variation>
    <location>
        <position position="449"/>
    </location>
</feature>
<comment type="function">
    <text evidence="2 8">Major helicase player in mitochondrial RNA metabolism. Component of the mitochondrial degradosome (mtEXO) complex, that degrades 3' overhang double-stranded RNA with a 3'-to-5' directionality in an ATP-dependent manner. ATPase and ATP-dependent multisubstrate helicase, able to unwind double-stranded (ds) DNA and RNA, and RNA/DNA heteroduplexes in the 5'-to-3' direction. Plays a role in the RNA surveillance system in mitochondria; regulates the stability of mature mRNAs, the removal of aberrantly formed mRNAs and the rapid degradation of non coding processing intermediates (By similarity). Required during pollen development (PubMed:19237690).</text>
</comment>
<comment type="catalytic activity">
    <reaction evidence="6">
        <text>ATP + H2O = ADP + phosphate + H(+)</text>
        <dbReference type="Rhea" id="RHEA:13065"/>
        <dbReference type="ChEBI" id="CHEBI:15377"/>
        <dbReference type="ChEBI" id="CHEBI:15378"/>
        <dbReference type="ChEBI" id="CHEBI:30616"/>
        <dbReference type="ChEBI" id="CHEBI:43474"/>
        <dbReference type="ChEBI" id="CHEBI:456216"/>
        <dbReference type="EC" id="3.6.4.13"/>
    </reaction>
</comment>
<comment type="cofactor">
    <cofactor evidence="2">
        <name>Mg(2+)</name>
        <dbReference type="ChEBI" id="CHEBI:18420"/>
    </cofactor>
    <cofactor evidence="2">
        <name>Mn(2+)</name>
        <dbReference type="ChEBI" id="CHEBI:29035"/>
    </cofactor>
</comment>
<comment type="activity regulation">
    <text evidence="6">Activated by the presence of mitochondrial RNA.</text>
</comment>
<comment type="subunit">
    <text evidence="2">Homodimer; in free form. Component of the mitochondrial degradosome (mtEXO) complex which is a heteropentamer containing 2 copies of SUPV3L1 and 3 copies of PNPT1.</text>
</comment>
<comment type="subcellular location">
    <subcellularLocation>
        <location evidence="2">Nucleus</location>
    </subcellularLocation>
    <subcellularLocation>
        <location evidence="6">Mitochondrion matrix</location>
    </subcellularLocation>
    <subcellularLocation>
        <location evidence="2">Mitochondrion matrix</location>
        <location evidence="2">Mitochondrion nucleoid</location>
    </subcellularLocation>
</comment>
<comment type="tissue specificity">
    <text evidence="6">Weakly expressed.</text>
</comment>
<comment type="disruption phenotype">
    <text evidence="7 8">Variant nuclear number and positions (PubMed:15634699). Pollen development defective (PubMed:19237690).</text>
</comment>
<comment type="similarity">
    <text evidence="12">Belongs to the DExH box helicase family.</text>
</comment>
<comment type="sequence caution" evidence="12">
    <conflict type="erroneous gene model prediction">
        <sequence resource="EMBL-CDS" id="CAB10258"/>
    </conflict>
</comment>
<comment type="sequence caution" evidence="12">
    <conflict type="erroneous gene model prediction">
        <sequence resource="EMBL-CDS" id="CAB78521"/>
    </conflict>
</comment>
<dbReference type="EC" id="3.6.4.13" evidence="6"/>
<dbReference type="EMBL" id="AJ132843">
    <property type="protein sequence ID" value="CAB53782.1"/>
    <property type="molecule type" value="mRNA"/>
</dbReference>
<dbReference type="EMBL" id="Z97337">
    <property type="protein sequence ID" value="CAB10258.1"/>
    <property type="status" value="ALT_SEQ"/>
    <property type="molecule type" value="Genomic_DNA"/>
</dbReference>
<dbReference type="EMBL" id="AL161540">
    <property type="protein sequence ID" value="CAB78521.1"/>
    <property type="status" value="ALT_SEQ"/>
    <property type="molecule type" value="Genomic_DNA"/>
</dbReference>
<dbReference type="EMBL" id="CP002687">
    <property type="protein sequence ID" value="AEE83499.1"/>
    <property type="molecule type" value="Genomic_DNA"/>
</dbReference>
<dbReference type="EMBL" id="CP002687">
    <property type="protein sequence ID" value="ANM66324.1"/>
    <property type="molecule type" value="Genomic_DNA"/>
</dbReference>
<dbReference type="EMBL" id="AY139995">
    <property type="protein sequence ID" value="AAM98137.1"/>
    <property type="molecule type" value="mRNA"/>
</dbReference>
<dbReference type="EMBL" id="BT008910">
    <property type="protein sequence ID" value="AAP68349.1"/>
    <property type="molecule type" value="mRNA"/>
</dbReference>
<dbReference type="EMBL" id="AK229714">
    <property type="protein sequence ID" value="BAF01552.1"/>
    <property type="molecule type" value="mRNA"/>
</dbReference>
<dbReference type="PIR" id="H71410">
    <property type="entry name" value="H71410"/>
</dbReference>
<dbReference type="PIR" id="T52576">
    <property type="entry name" value="T52576"/>
</dbReference>
<dbReference type="RefSeq" id="NP_001328228.1">
    <property type="nucleotide sequence ID" value="NM_001340972.1"/>
</dbReference>
<dbReference type="RefSeq" id="NP_193215.2">
    <property type="nucleotide sequence ID" value="NM_117564.4"/>
</dbReference>
<dbReference type="SMR" id="Q9SMX1"/>
<dbReference type="FunCoup" id="Q9SMX1">
    <property type="interactions" value="213"/>
</dbReference>
<dbReference type="STRING" id="3702.Q9SMX1"/>
<dbReference type="GlyGen" id="Q9SMX1">
    <property type="glycosylation" value="1 site"/>
</dbReference>
<dbReference type="PaxDb" id="3702-AT4G14790.1"/>
<dbReference type="ProteomicsDB" id="226794"/>
<dbReference type="EnsemblPlants" id="AT4G14790.1">
    <property type="protein sequence ID" value="AT4G14790.1"/>
    <property type="gene ID" value="AT4G14790"/>
</dbReference>
<dbReference type="EnsemblPlants" id="AT4G14790.2">
    <property type="protein sequence ID" value="AT4G14790.2"/>
    <property type="gene ID" value="AT4G14790"/>
</dbReference>
<dbReference type="GeneID" id="827134"/>
<dbReference type="Gramene" id="AT4G14790.1">
    <property type="protein sequence ID" value="AT4G14790.1"/>
    <property type="gene ID" value="AT4G14790"/>
</dbReference>
<dbReference type="Gramene" id="AT4G14790.2">
    <property type="protein sequence ID" value="AT4G14790.2"/>
    <property type="gene ID" value="AT4G14790"/>
</dbReference>
<dbReference type="KEGG" id="ath:AT4G14790"/>
<dbReference type="Araport" id="AT4G14790"/>
<dbReference type="TAIR" id="AT4G14790">
    <property type="gene designation" value="ATSUV3"/>
</dbReference>
<dbReference type="eggNOG" id="KOG0953">
    <property type="taxonomic scope" value="Eukaryota"/>
</dbReference>
<dbReference type="HOGENOM" id="CLU_010647_2_0_1"/>
<dbReference type="InParanoid" id="Q9SMX1"/>
<dbReference type="OMA" id="QPANWYT"/>
<dbReference type="PhylomeDB" id="Q9SMX1"/>
<dbReference type="PRO" id="PR:Q9SMX1"/>
<dbReference type="Proteomes" id="UP000006548">
    <property type="component" value="Chromosome 4"/>
</dbReference>
<dbReference type="ExpressionAtlas" id="Q9SMX1">
    <property type="expression patterns" value="baseline and differential"/>
</dbReference>
<dbReference type="GO" id="GO:0042645">
    <property type="term" value="C:mitochondrial nucleoid"/>
    <property type="evidence" value="ECO:0007669"/>
    <property type="project" value="UniProtKB-SubCell"/>
</dbReference>
<dbReference type="GO" id="GO:0005739">
    <property type="term" value="C:mitochondrion"/>
    <property type="evidence" value="ECO:0000314"/>
    <property type="project" value="TAIR"/>
</dbReference>
<dbReference type="GO" id="GO:0005634">
    <property type="term" value="C:nucleus"/>
    <property type="evidence" value="ECO:0007669"/>
    <property type="project" value="UniProtKB-SubCell"/>
</dbReference>
<dbReference type="GO" id="GO:0005524">
    <property type="term" value="F:ATP binding"/>
    <property type="evidence" value="ECO:0007669"/>
    <property type="project" value="UniProtKB-KW"/>
</dbReference>
<dbReference type="GO" id="GO:0016887">
    <property type="term" value="F:ATP hydrolysis activity"/>
    <property type="evidence" value="ECO:0007669"/>
    <property type="project" value="EnsemblPlants"/>
</dbReference>
<dbReference type="GO" id="GO:0003678">
    <property type="term" value="F:DNA helicase activity"/>
    <property type="evidence" value="ECO:0007669"/>
    <property type="project" value="EnsemblPlants"/>
</dbReference>
<dbReference type="GO" id="GO:0003723">
    <property type="term" value="F:RNA binding"/>
    <property type="evidence" value="ECO:0007669"/>
    <property type="project" value="UniProtKB-KW"/>
</dbReference>
<dbReference type="GO" id="GO:0003724">
    <property type="term" value="F:RNA helicase activity"/>
    <property type="evidence" value="ECO:0000314"/>
    <property type="project" value="TAIR"/>
</dbReference>
<dbReference type="GO" id="GO:0009561">
    <property type="term" value="P:megagametogenesis"/>
    <property type="evidence" value="ECO:0000315"/>
    <property type="project" value="TAIR"/>
</dbReference>
<dbReference type="GO" id="GO:0009555">
    <property type="term" value="P:pollen development"/>
    <property type="evidence" value="ECO:0000315"/>
    <property type="project" value="TAIR"/>
</dbReference>
<dbReference type="GO" id="GO:0010929">
    <property type="term" value="P:positive regulation of auxin mediated signaling pathway"/>
    <property type="evidence" value="ECO:0007669"/>
    <property type="project" value="EnsemblPlants"/>
</dbReference>
<dbReference type="GO" id="GO:0080038">
    <property type="term" value="P:positive regulation of cytokinin-activated signaling pathway"/>
    <property type="evidence" value="ECO:0007669"/>
    <property type="project" value="EnsemblPlants"/>
</dbReference>
<dbReference type="GO" id="GO:0009939">
    <property type="term" value="P:positive regulation of gibberellic acid mediated signaling pathway"/>
    <property type="evidence" value="ECO:0007669"/>
    <property type="project" value="EnsemblPlants"/>
</dbReference>
<dbReference type="GO" id="GO:1901002">
    <property type="term" value="P:positive regulation of response to salt stress"/>
    <property type="evidence" value="ECO:0007669"/>
    <property type="project" value="EnsemblPlants"/>
</dbReference>
<dbReference type="GO" id="GO:1902584">
    <property type="term" value="P:positive regulation of response to water deprivation"/>
    <property type="evidence" value="ECO:0007669"/>
    <property type="project" value="EnsemblPlants"/>
</dbReference>
<dbReference type="GO" id="GO:0009651">
    <property type="term" value="P:response to salt stress"/>
    <property type="evidence" value="ECO:0007669"/>
    <property type="project" value="EnsemblPlants"/>
</dbReference>
<dbReference type="GO" id="GO:0016070">
    <property type="term" value="P:RNA metabolic process"/>
    <property type="evidence" value="ECO:0000314"/>
    <property type="project" value="TAIR"/>
</dbReference>
<dbReference type="CDD" id="cd17913">
    <property type="entry name" value="DEXQc_Suv3"/>
    <property type="match status" value="1"/>
</dbReference>
<dbReference type="CDD" id="cd18805">
    <property type="entry name" value="SF2_C_suv3"/>
    <property type="match status" value="1"/>
</dbReference>
<dbReference type="FunFam" id="3.40.50.300:FF:000269">
    <property type="entry name" value="ATP-dependent RNA helicase SUPV3L1, mitochondrial"/>
    <property type="match status" value="1"/>
</dbReference>
<dbReference type="FunFam" id="1.20.272.40:FF:000002">
    <property type="entry name" value="ATP-dependent RNA helicase SUV3, mitochondrial"/>
    <property type="match status" value="1"/>
</dbReference>
<dbReference type="FunFam" id="3.40.50.300:FF:001109">
    <property type="entry name" value="ATP-dependent RNA helicase suv3, mitochondrial"/>
    <property type="match status" value="1"/>
</dbReference>
<dbReference type="Gene3D" id="1.20.272.40">
    <property type="match status" value="1"/>
</dbReference>
<dbReference type="Gene3D" id="1.20.58.1080">
    <property type="match status" value="1"/>
</dbReference>
<dbReference type="Gene3D" id="3.40.50.300">
    <property type="entry name" value="P-loop containing nucleotide triphosphate hydrolases"/>
    <property type="match status" value="2"/>
</dbReference>
<dbReference type="InterPro" id="IPR055206">
    <property type="entry name" value="DEXQc_SUV3"/>
</dbReference>
<dbReference type="InterPro" id="IPR001650">
    <property type="entry name" value="Helicase_C-like"/>
</dbReference>
<dbReference type="InterPro" id="IPR027417">
    <property type="entry name" value="P-loop_NTPase"/>
</dbReference>
<dbReference type="InterPro" id="IPR050699">
    <property type="entry name" value="RNA-DNA_Helicase"/>
</dbReference>
<dbReference type="InterPro" id="IPR022192">
    <property type="entry name" value="SUV3_C"/>
</dbReference>
<dbReference type="InterPro" id="IPR041082">
    <property type="entry name" value="Suv3_C_1"/>
</dbReference>
<dbReference type="InterPro" id="IPR044774">
    <property type="entry name" value="Suv3_DEXQc"/>
</dbReference>
<dbReference type="PANTHER" id="PTHR12131">
    <property type="entry name" value="ATP-DEPENDENT RNA AND DNA HELICASE"/>
    <property type="match status" value="1"/>
</dbReference>
<dbReference type="PANTHER" id="PTHR12131:SF1">
    <property type="entry name" value="ATP-DEPENDENT RNA HELICASE SUPV3L1, MITOCHONDRIAL-RELATED"/>
    <property type="match status" value="1"/>
</dbReference>
<dbReference type="Pfam" id="PF22527">
    <property type="entry name" value="DEXQc_Suv3"/>
    <property type="match status" value="1"/>
</dbReference>
<dbReference type="Pfam" id="PF00271">
    <property type="entry name" value="Helicase_C"/>
    <property type="match status" value="1"/>
</dbReference>
<dbReference type="Pfam" id="PF12513">
    <property type="entry name" value="SUV3_C"/>
    <property type="match status" value="1"/>
</dbReference>
<dbReference type="Pfam" id="PF18147">
    <property type="entry name" value="Suv3_C_1"/>
    <property type="match status" value="1"/>
</dbReference>
<dbReference type="SMART" id="SM00490">
    <property type="entry name" value="HELICc"/>
    <property type="match status" value="1"/>
</dbReference>
<dbReference type="SUPFAM" id="SSF52540">
    <property type="entry name" value="P-loop containing nucleoside triphosphate hydrolases"/>
    <property type="match status" value="1"/>
</dbReference>
<dbReference type="PROSITE" id="PS51192">
    <property type="entry name" value="HELICASE_ATP_BIND_1"/>
    <property type="match status" value="1"/>
</dbReference>
<dbReference type="PROSITE" id="PS51194">
    <property type="entry name" value="HELICASE_CTER"/>
    <property type="match status" value="1"/>
</dbReference>
<organism evidence="15">
    <name type="scientific">Arabidopsis thaliana</name>
    <name type="common">Mouse-ear cress</name>
    <dbReference type="NCBI Taxonomy" id="3702"/>
    <lineage>
        <taxon>Eukaryota</taxon>
        <taxon>Viridiplantae</taxon>
        <taxon>Streptophyta</taxon>
        <taxon>Embryophyta</taxon>
        <taxon>Tracheophyta</taxon>
        <taxon>Spermatophyta</taxon>
        <taxon>Magnoliopsida</taxon>
        <taxon>eudicotyledons</taxon>
        <taxon>Gunneridae</taxon>
        <taxon>Pentapetalae</taxon>
        <taxon>rosids</taxon>
        <taxon>malvids</taxon>
        <taxon>Brassicales</taxon>
        <taxon>Brassicaceae</taxon>
        <taxon>Camelineae</taxon>
        <taxon>Arabidopsis</taxon>
    </lineage>
</organism>
<evidence type="ECO:0000250" key="1">
    <source>
        <dbReference type="UniProtKB" id="Q80YD1"/>
    </source>
</evidence>
<evidence type="ECO:0000250" key="2">
    <source>
        <dbReference type="UniProtKB" id="Q8IYB8"/>
    </source>
</evidence>
<evidence type="ECO:0000255" key="3"/>
<evidence type="ECO:0000255" key="4">
    <source>
        <dbReference type="PROSITE-ProRule" id="PRU00541"/>
    </source>
</evidence>
<evidence type="ECO:0000255" key="5">
    <source>
        <dbReference type="PROSITE-ProRule" id="PRU00542"/>
    </source>
</evidence>
<evidence type="ECO:0000269" key="6">
    <source>
    </source>
</evidence>
<evidence type="ECO:0000269" key="7">
    <source>
    </source>
</evidence>
<evidence type="ECO:0000269" key="8">
    <source>
    </source>
</evidence>
<evidence type="ECO:0000303" key="9">
    <source>
    </source>
</evidence>
<evidence type="ECO:0000303" key="10">
    <source>
    </source>
</evidence>
<evidence type="ECO:0000303" key="11">
    <source>
    </source>
</evidence>
<evidence type="ECO:0000305" key="12"/>
<evidence type="ECO:0000312" key="13">
    <source>
        <dbReference type="Araport" id="AT4G14790"/>
    </source>
</evidence>
<evidence type="ECO:0000312" key="14">
    <source>
        <dbReference type="EMBL" id="CAB10258.1"/>
    </source>
</evidence>
<evidence type="ECO:0000312" key="15">
    <source>
        <dbReference type="EMBL" id="CAB53782.1"/>
    </source>
</evidence>
<evidence type="ECO:0000312" key="16">
    <source>
        <dbReference type="EMBL" id="CAB78521.1"/>
    </source>
</evidence>
<reference key="1">
    <citation type="journal article" date="1999" name="FEBS Lett.">
        <title>An RNA helicase (AtSUV3) is present in Arabidopsis thaliana mitochondria.</title>
        <authorList>
            <person name="Gagliardi D."/>
            <person name="Kuhn J."/>
            <person name="Spadinger U."/>
            <person name="Brennicke A."/>
            <person name="Leaver C.J."/>
            <person name="Binder S."/>
        </authorList>
    </citation>
    <scope>NUCLEOTIDE SEQUENCE [MRNA]</scope>
    <scope>SUBCELLULAR LOCATION</scope>
    <scope>CATALYTIC ACTIVITY</scope>
    <scope>ACTIVITY REGULATION</scope>
    <scope>TISSUE SPECIFICITY</scope>
    <source>
        <strain>cv. Columbia</strain>
    </source>
</reference>
<reference key="2">
    <citation type="journal article" date="1998" name="Nature">
        <title>Analysis of 1.9 Mb of contiguous sequence from chromosome 4 of Arabidopsis thaliana.</title>
        <authorList>
            <person name="Bevan M."/>
            <person name="Bancroft I."/>
            <person name="Bent E."/>
            <person name="Love K."/>
            <person name="Goodman H.M."/>
            <person name="Dean C."/>
            <person name="Bergkamp R."/>
            <person name="Dirkse W."/>
            <person name="van Staveren M."/>
            <person name="Stiekema W."/>
            <person name="Drost L."/>
            <person name="Ridley P."/>
            <person name="Hudson S.-A."/>
            <person name="Patel K."/>
            <person name="Murphy G."/>
            <person name="Piffanelli P."/>
            <person name="Wedler H."/>
            <person name="Wedler E."/>
            <person name="Wambutt R."/>
            <person name="Weitzenegger T."/>
            <person name="Pohl T."/>
            <person name="Terryn N."/>
            <person name="Gielen J."/>
            <person name="Villarroel R."/>
            <person name="De Clercq R."/>
            <person name="van Montagu M."/>
            <person name="Lecharny A."/>
            <person name="Aubourg S."/>
            <person name="Gy I."/>
            <person name="Kreis M."/>
            <person name="Lao N."/>
            <person name="Kavanagh T."/>
            <person name="Hempel S."/>
            <person name="Kotter P."/>
            <person name="Entian K.-D."/>
            <person name="Rieger M."/>
            <person name="Schaefer M."/>
            <person name="Funk B."/>
            <person name="Mueller-Auer S."/>
            <person name="Silvey M."/>
            <person name="James R."/>
            <person name="Monfort A."/>
            <person name="Pons A."/>
            <person name="Puigdomenech P."/>
            <person name="Douka A."/>
            <person name="Voukelatou E."/>
            <person name="Milioni D."/>
            <person name="Hatzopoulos P."/>
            <person name="Piravandi E."/>
            <person name="Obermaier B."/>
            <person name="Hilbert H."/>
            <person name="Duesterhoeft A."/>
            <person name="Moores T."/>
            <person name="Jones J.D.G."/>
            <person name="Eneva T."/>
            <person name="Palme K."/>
            <person name="Benes V."/>
            <person name="Rechmann S."/>
            <person name="Ansorge W."/>
            <person name="Cooke R."/>
            <person name="Berger C."/>
            <person name="Delseny M."/>
            <person name="Voet M."/>
            <person name="Volckaert G."/>
            <person name="Mewes H.-W."/>
            <person name="Klosterman S."/>
            <person name="Schueller C."/>
            <person name="Chalwatzis N."/>
        </authorList>
    </citation>
    <scope>NUCLEOTIDE SEQUENCE [LARGE SCALE GENOMIC DNA]</scope>
    <source>
        <strain>cv. Columbia</strain>
    </source>
</reference>
<reference key="3">
    <citation type="journal article" date="1999" name="Nature">
        <title>Sequence and analysis of chromosome 4 of the plant Arabidopsis thaliana.</title>
        <authorList>
            <person name="Mayer K.F.X."/>
            <person name="Schueller C."/>
            <person name="Wambutt R."/>
            <person name="Murphy G."/>
            <person name="Volckaert G."/>
            <person name="Pohl T."/>
            <person name="Duesterhoeft A."/>
            <person name="Stiekema W."/>
            <person name="Entian K.-D."/>
            <person name="Terryn N."/>
            <person name="Harris B."/>
            <person name="Ansorge W."/>
            <person name="Brandt P."/>
            <person name="Grivell L.A."/>
            <person name="Rieger M."/>
            <person name="Weichselgartner M."/>
            <person name="de Simone V."/>
            <person name="Obermaier B."/>
            <person name="Mache R."/>
            <person name="Mueller M."/>
            <person name="Kreis M."/>
            <person name="Delseny M."/>
            <person name="Puigdomenech P."/>
            <person name="Watson M."/>
            <person name="Schmidtheini T."/>
            <person name="Reichert B."/>
            <person name="Portetelle D."/>
            <person name="Perez-Alonso M."/>
            <person name="Boutry M."/>
            <person name="Bancroft I."/>
            <person name="Vos P."/>
            <person name="Hoheisel J."/>
            <person name="Zimmermann W."/>
            <person name="Wedler H."/>
            <person name="Ridley P."/>
            <person name="Langham S.-A."/>
            <person name="McCullagh B."/>
            <person name="Bilham L."/>
            <person name="Robben J."/>
            <person name="van der Schueren J."/>
            <person name="Grymonprez B."/>
            <person name="Chuang Y.-J."/>
            <person name="Vandenbussche F."/>
            <person name="Braeken M."/>
            <person name="Weltjens I."/>
            <person name="Voet M."/>
            <person name="Bastiaens I."/>
            <person name="Aert R."/>
            <person name="Defoor E."/>
            <person name="Weitzenegger T."/>
            <person name="Bothe G."/>
            <person name="Ramsperger U."/>
            <person name="Hilbert H."/>
            <person name="Braun M."/>
            <person name="Holzer E."/>
            <person name="Brandt A."/>
            <person name="Peters S."/>
            <person name="van Staveren M."/>
            <person name="Dirkse W."/>
            <person name="Mooijman P."/>
            <person name="Klein Lankhorst R."/>
            <person name="Rose M."/>
            <person name="Hauf J."/>
            <person name="Koetter P."/>
            <person name="Berneiser S."/>
            <person name="Hempel S."/>
            <person name="Feldpausch M."/>
            <person name="Lamberth S."/>
            <person name="Van den Daele H."/>
            <person name="De Keyser A."/>
            <person name="Buysshaert C."/>
            <person name="Gielen J."/>
            <person name="Villarroel R."/>
            <person name="De Clercq R."/>
            <person name="van Montagu M."/>
            <person name="Rogers J."/>
            <person name="Cronin A."/>
            <person name="Quail M.A."/>
            <person name="Bray-Allen S."/>
            <person name="Clark L."/>
            <person name="Doggett J."/>
            <person name="Hall S."/>
            <person name="Kay M."/>
            <person name="Lennard N."/>
            <person name="McLay K."/>
            <person name="Mayes R."/>
            <person name="Pettett A."/>
            <person name="Rajandream M.A."/>
            <person name="Lyne M."/>
            <person name="Benes V."/>
            <person name="Rechmann S."/>
            <person name="Borkova D."/>
            <person name="Bloecker H."/>
            <person name="Scharfe M."/>
            <person name="Grimm M."/>
            <person name="Loehnert T.-H."/>
            <person name="Dose S."/>
            <person name="de Haan M."/>
            <person name="Maarse A.C."/>
            <person name="Schaefer M."/>
            <person name="Mueller-Auer S."/>
            <person name="Gabel C."/>
            <person name="Fuchs M."/>
            <person name="Fartmann B."/>
            <person name="Granderath K."/>
            <person name="Dauner D."/>
            <person name="Herzl A."/>
            <person name="Neumann S."/>
            <person name="Argiriou A."/>
            <person name="Vitale D."/>
            <person name="Liguori R."/>
            <person name="Piravandi E."/>
            <person name="Massenet O."/>
            <person name="Quigley F."/>
            <person name="Clabauld G."/>
            <person name="Muendlein A."/>
            <person name="Felber R."/>
            <person name="Schnabl S."/>
            <person name="Hiller R."/>
            <person name="Schmidt W."/>
            <person name="Lecharny A."/>
            <person name="Aubourg S."/>
            <person name="Chefdor F."/>
            <person name="Cooke R."/>
            <person name="Berger C."/>
            <person name="Monfort A."/>
            <person name="Casacuberta E."/>
            <person name="Gibbons T."/>
            <person name="Weber N."/>
            <person name="Vandenbol M."/>
            <person name="Bargues M."/>
            <person name="Terol J."/>
            <person name="Torres A."/>
            <person name="Perez-Perez A."/>
            <person name="Purnelle B."/>
            <person name="Bent E."/>
            <person name="Johnson S."/>
            <person name="Tacon D."/>
            <person name="Jesse T."/>
            <person name="Heijnen L."/>
            <person name="Schwarz S."/>
            <person name="Scholler P."/>
            <person name="Heber S."/>
            <person name="Francs P."/>
            <person name="Bielke C."/>
            <person name="Frishman D."/>
            <person name="Haase D."/>
            <person name="Lemcke K."/>
            <person name="Mewes H.-W."/>
            <person name="Stocker S."/>
            <person name="Zaccaria P."/>
            <person name="Bevan M."/>
            <person name="Wilson R.K."/>
            <person name="de la Bastide M."/>
            <person name="Habermann K."/>
            <person name="Parnell L."/>
            <person name="Dedhia N."/>
            <person name="Gnoj L."/>
            <person name="Schutz K."/>
            <person name="Huang E."/>
            <person name="Spiegel L."/>
            <person name="Sekhon M."/>
            <person name="Murray J."/>
            <person name="Sheet P."/>
            <person name="Cordes M."/>
            <person name="Abu-Threideh J."/>
            <person name="Stoneking T."/>
            <person name="Kalicki J."/>
            <person name="Graves T."/>
            <person name="Harmon G."/>
            <person name="Edwards J."/>
            <person name="Latreille P."/>
            <person name="Courtney L."/>
            <person name="Cloud J."/>
            <person name="Abbott A."/>
            <person name="Scott K."/>
            <person name="Johnson D."/>
            <person name="Minx P."/>
            <person name="Bentley D."/>
            <person name="Fulton B."/>
            <person name="Miller N."/>
            <person name="Greco T."/>
            <person name="Kemp K."/>
            <person name="Kramer J."/>
            <person name="Fulton L."/>
            <person name="Mardis E."/>
            <person name="Dante M."/>
            <person name="Pepin K."/>
            <person name="Hillier L.W."/>
            <person name="Nelson J."/>
            <person name="Spieth J."/>
            <person name="Ryan E."/>
            <person name="Andrews S."/>
            <person name="Geisel C."/>
            <person name="Layman D."/>
            <person name="Du H."/>
            <person name="Ali J."/>
            <person name="Berghoff A."/>
            <person name="Jones K."/>
            <person name="Drone K."/>
            <person name="Cotton M."/>
            <person name="Joshu C."/>
            <person name="Antonoiu B."/>
            <person name="Zidanic M."/>
            <person name="Strong C."/>
            <person name="Sun H."/>
            <person name="Lamar B."/>
            <person name="Yordan C."/>
            <person name="Ma P."/>
            <person name="Zhong J."/>
            <person name="Preston R."/>
            <person name="Vil D."/>
            <person name="Shekher M."/>
            <person name="Matero A."/>
            <person name="Shah R."/>
            <person name="Swaby I.K."/>
            <person name="O'Shaughnessy A."/>
            <person name="Rodriguez M."/>
            <person name="Hoffman J."/>
            <person name="Till S."/>
            <person name="Granat S."/>
            <person name="Shohdy N."/>
            <person name="Hasegawa A."/>
            <person name="Hameed A."/>
            <person name="Lodhi M."/>
            <person name="Johnson A."/>
            <person name="Chen E."/>
            <person name="Marra M.A."/>
            <person name="Martienssen R."/>
            <person name="McCombie W.R."/>
        </authorList>
    </citation>
    <scope>NUCLEOTIDE SEQUENCE [LARGE SCALE GENOMIC DNA]</scope>
    <source>
        <strain>cv. Columbia</strain>
    </source>
</reference>
<reference key="4">
    <citation type="journal article" date="2017" name="Plant J.">
        <title>Araport11: a complete reannotation of the Arabidopsis thaliana reference genome.</title>
        <authorList>
            <person name="Cheng C.Y."/>
            <person name="Krishnakumar V."/>
            <person name="Chan A.P."/>
            <person name="Thibaud-Nissen F."/>
            <person name="Schobel S."/>
            <person name="Town C.D."/>
        </authorList>
    </citation>
    <scope>GENOME REANNOTATION</scope>
    <source>
        <strain>cv. Columbia</strain>
    </source>
</reference>
<reference key="5">
    <citation type="journal article" date="2003" name="Science">
        <title>Empirical analysis of transcriptional activity in the Arabidopsis genome.</title>
        <authorList>
            <person name="Yamada K."/>
            <person name="Lim J."/>
            <person name="Dale J.M."/>
            <person name="Chen H."/>
            <person name="Shinn P."/>
            <person name="Palm C.J."/>
            <person name="Southwick A.M."/>
            <person name="Wu H.C."/>
            <person name="Kim C.J."/>
            <person name="Nguyen M."/>
            <person name="Pham P.K."/>
            <person name="Cheuk R.F."/>
            <person name="Karlin-Newmann G."/>
            <person name="Liu S.X."/>
            <person name="Lam B."/>
            <person name="Sakano H."/>
            <person name="Wu T."/>
            <person name="Yu G."/>
            <person name="Miranda M."/>
            <person name="Quach H.L."/>
            <person name="Tripp M."/>
            <person name="Chang C.H."/>
            <person name="Lee J.M."/>
            <person name="Toriumi M.J."/>
            <person name="Chan M.M."/>
            <person name="Tang C.C."/>
            <person name="Onodera C.S."/>
            <person name="Deng J.M."/>
            <person name="Akiyama K."/>
            <person name="Ansari Y."/>
            <person name="Arakawa T."/>
            <person name="Banh J."/>
            <person name="Banno F."/>
            <person name="Bowser L."/>
            <person name="Brooks S.Y."/>
            <person name="Carninci P."/>
            <person name="Chao Q."/>
            <person name="Choy N."/>
            <person name="Enju A."/>
            <person name="Goldsmith A.D."/>
            <person name="Gurjal M."/>
            <person name="Hansen N.F."/>
            <person name="Hayashizaki Y."/>
            <person name="Johnson-Hopson C."/>
            <person name="Hsuan V.W."/>
            <person name="Iida K."/>
            <person name="Karnes M."/>
            <person name="Khan S."/>
            <person name="Koesema E."/>
            <person name="Ishida J."/>
            <person name="Jiang P.X."/>
            <person name="Jones T."/>
            <person name="Kawai J."/>
            <person name="Kamiya A."/>
            <person name="Meyers C."/>
            <person name="Nakajima M."/>
            <person name="Narusaka M."/>
            <person name="Seki M."/>
            <person name="Sakurai T."/>
            <person name="Satou M."/>
            <person name="Tamse R."/>
            <person name="Vaysberg M."/>
            <person name="Wallender E.K."/>
            <person name="Wong C."/>
            <person name="Yamamura Y."/>
            <person name="Yuan S."/>
            <person name="Shinozaki K."/>
            <person name="Davis R.W."/>
            <person name="Theologis A."/>
            <person name="Ecker J.R."/>
        </authorList>
    </citation>
    <scope>NUCLEOTIDE SEQUENCE [LARGE SCALE MRNA]</scope>
    <source>
        <strain>cv. Columbia</strain>
    </source>
</reference>
<reference key="6">
    <citation type="submission" date="2006-07" db="EMBL/GenBank/DDBJ databases">
        <title>Large-scale analysis of RIKEN Arabidopsis full-length (RAFL) cDNAs.</title>
        <authorList>
            <person name="Totoki Y."/>
            <person name="Seki M."/>
            <person name="Ishida J."/>
            <person name="Nakajima M."/>
            <person name="Enju A."/>
            <person name="Kamiya A."/>
            <person name="Narusaka M."/>
            <person name="Shin-i T."/>
            <person name="Nakagawa M."/>
            <person name="Sakamoto N."/>
            <person name="Oishi K."/>
            <person name="Kohara Y."/>
            <person name="Kobayashi M."/>
            <person name="Toyoda A."/>
            <person name="Sakaki Y."/>
            <person name="Sakurai T."/>
            <person name="Iida K."/>
            <person name="Akiyama K."/>
            <person name="Satou M."/>
            <person name="Toyoda T."/>
            <person name="Konagaya A."/>
            <person name="Carninci P."/>
            <person name="Kawai J."/>
            <person name="Hayashizaki Y."/>
            <person name="Shinozaki K."/>
        </authorList>
    </citation>
    <scope>NUCLEOTIDE SEQUENCE [LARGE SCALE MRNA]</scope>
    <source>
        <strain>cv. Columbia</strain>
    </source>
</reference>
<reference key="7">
    <citation type="journal article" date="2005" name="Development">
        <title>Genetic and molecular identification of genes required for female gametophyte development and function in Arabidopsis.</title>
        <authorList>
            <person name="Pagnussat G.C."/>
            <person name="Yu H.-J."/>
            <person name="Ngo Q.A."/>
            <person name="Rajani S."/>
            <person name="Mayalagu S."/>
            <person name="Johnson C.S."/>
            <person name="Capron A."/>
            <person name="Xie L.-F."/>
            <person name="Ye D."/>
            <person name="Sundaresan V."/>
        </authorList>
    </citation>
    <scope>DISRUPTION PHENOTYPE</scope>
</reference>
<reference key="8">
    <citation type="journal article" date="2009" name="Genetics">
        <title>A collection of Ds insertional mutants associated with defects in male gametophyte development and function in Arabidopsis thaliana.</title>
        <authorList>
            <person name="Boavida L.C."/>
            <person name="Shuai B."/>
            <person name="Yu H.J."/>
            <person name="Pagnussat G.C."/>
            <person name="Sundaresan V."/>
            <person name="McCormick S."/>
        </authorList>
    </citation>
    <scope>FUNCTION</scope>
    <scope>DISRUPTION PHENOTYPE</scope>
</reference>
<reference key="9">
    <citation type="journal article" date="2013" name="PLoS ONE">
        <title>Genome-wide comparative in silico analysis of the RNA helicase gene family in Zea mays and Glycine max: a comparison with Arabidopsis and Oryza sativa.</title>
        <authorList>
            <person name="Xu R."/>
            <person name="Zhang S."/>
            <person name="Huang J."/>
            <person name="Zheng C."/>
        </authorList>
    </citation>
    <scope>GENE FAMILY</scope>
</reference>